<name>WZY_SHIFL</name>
<gene>
    <name evidence="4" type="primary">wzy</name>
    <name evidence="3" type="synonym">rfc</name>
    <name type="ordered locus">SF2097</name>
    <name type="ordered locus">S2219</name>
</gene>
<comment type="function">
    <text evidence="1 5">Polymerase involved in the biosynthesis of the lipopolysaccharide (LPS) (PubMed:7507920). Catalyzes the polymerization of the O-antigen repeat units on the periplasmic face of the inner membrane, leading to the formation of the lipid-linked O-antigen molecule (Probable).</text>
</comment>
<comment type="catalytic activity">
    <reaction evidence="5">
        <text>n lipid-linked O-antigen repeat units = a lipid-linked O antigen + (n-1) polyisoprenyl diphosphate.</text>
        <dbReference type="EC" id="2.4.99.27"/>
    </reaction>
</comment>
<comment type="pathway">
    <text evidence="1">Bacterial outer membrane biogenesis; LPS O-antigen biosynthesis.</text>
</comment>
<comment type="subcellular location">
    <subcellularLocation>
        <location evidence="2 5">Cell inner membrane</location>
        <topology evidence="2">Multi-pass membrane protein</topology>
    </subcellularLocation>
</comment>
<comment type="disruption phenotype">
    <text evidence="1">Mutants produce a semi-rough LPS, which contains only one O-antigen repeat unit.</text>
</comment>
<dbReference type="EC" id="2.4.99.27" evidence="5"/>
<dbReference type="EMBL" id="X71970">
    <property type="protein sequence ID" value="CAA50774.1"/>
    <property type="molecule type" value="Genomic_DNA"/>
</dbReference>
<dbReference type="EMBL" id="AE005674">
    <property type="protein sequence ID" value="AAN43636.1"/>
    <property type="molecule type" value="Genomic_DNA"/>
</dbReference>
<dbReference type="EMBL" id="AE014073">
    <property type="protein sequence ID" value="AAP17465.1"/>
    <property type="molecule type" value="Genomic_DNA"/>
</dbReference>
<dbReference type="PIR" id="C36966">
    <property type="entry name" value="C36966"/>
</dbReference>
<dbReference type="RefSeq" id="NP_707929.1">
    <property type="nucleotide sequence ID" value="NC_004337.2"/>
</dbReference>
<dbReference type="RefSeq" id="WP_001059773.1">
    <property type="nucleotide sequence ID" value="NZ_WPGV01000030.1"/>
</dbReference>
<dbReference type="STRING" id="198214.SF2097"/>
<dbReference type="PaxDb" id="198214-SF2097"/>
<dbReference type="GeneID" id="1025297"/>
<dbReference type="KEGG" id="sfl:SF2097"/>
<dbReference type="KEGG" id="sfx:S2219"/>
<dbReference type="PATRIC" id="fig|198214.7.peg.2505"/>
<dbReference type="HOGENOM" id="CLU_723087_0_0_6"/>
<dbReference type="UniPathway" id="UPA00281"/>
<dbReference type="Proteomes" id="UP000001006">
    <property type="component" value="Chromosome"/>
</dbReference>
<dbReference type="Proteomes" id="UP000002673">
    <property type="component" value="Chromosome"/>
</dbReference>
<dbReference type="GO" id="GO:0005886">
    <property type="term" value="C:plasma membrane"/>
    <property type="evidence" value="ECO:0007669"/>
    <property type="project" value="UniProtKB-SubCell"/>
</dbReference>
<dbReference type="GO" id="GO:0016740">
    <property type="term" value="F:transferase activity"/>
    <property type="evidence" value="ECO:0007669"/>
    <property type="project" value="UniProtKB-KW"/>
</dbReference>
<dbReference type="GO" id="GO:0009103">
    <property type="term" value="P:lipopolysaccharide biosynthetic process"/>
    <property type="evidence" value="ECO:0007669"/>
    <property type="project" value="UniProtKB-UniPathway"/>
</dbReference>
<feature type="chain" id="PRO_0000097303" description="O-antigen polymerase">
    <location>
        <begin position="1"/>
        <end position="382"/>
    </location>
</feature>
<feature type="topological domain" description="Cytoplasmic" evidence="2">
    <location>
        <begin position="1"/>
        <end position="3"/>
    </location>
</feature>
<feature type="transmembrane region" description="Helical" evidence="6">
    <location>
        <begin position="4"/>
        <end position="22"/>
    </location>
</feature>
<feature type="topological domain" description="Periplasmic" evidence="2">
    <location>
        <begin position="23"/>
        <end position="34"/>
    </location>
</feature>
<feature type="transmembrane region" description="Helical" evidence="6">
    <location>
        <begin position="35"/>
        <end position="54"/>
    </location>
</feature>
<feature type="topological domain" description="Cytoplasmic" evidence="2">
    <location>
        <begin position="55"/>
        <end position="62"/>
    </location>
</feature>
<feature type="transmembrane region" description="Helical" evidence="6">
    <location>
        <begin position="63"/>
        <end position="81"/>
    </location>
</feature>
<feature type="topological domain" description="Periplasmic" evidence="2">
    <location>
        <begin position="82"/>
        <end position="94"/>
    </location>
</feature>
<feature type="transmembrane region" description="Helical" evidence="6">
    <location>
        <begin position="95"/>
        <end position="112"/>
    </location>
</feature>
<feature type="topological domain" description="Cytoplasmic" evidence="2">
    <location>
        <begin position="113"/>
        <end position="125"/>
    </location>
</feature>
<feature type="transmembrane region" description="Helical" evidence="6">
    <location>
        <begin position="126"/>
        <end position="146"/>
    </location>
</feature>
<feature type="topological domain" description="Periplasmic" evidence="2">
    <location>
        <begin position="147"/>
        <end position="167"/>
    </location>
</feature>
<feature type="transmembrane region" description="Helical" evidence="6">
    <location>
        <begin position="168"/>
        <end position="187"/>
    </location>
</feature>
<feature type="topological domain" description="Cytoplasmic" evidence="2">
    <location>
        <begin position="188"/>
        <end position="189"/>
    </location>
</feature>
<feature type="transmembrane region" description="Helical" evidence="6">
    <location>
        <begin position="190"/>
        <end position="206"/>
    </location>
</feature>
<feature type="topological domain" description="Periplasmic" evidence="2">
    <location>
        <begin position="207"/>
        <end position="208"/>
    </location>
</feature>
<feature type="transmembrane region" description="Helical" evidence="6">
    <location>
        <begin position="209"/>
        <end position="226"/>
    </location>
</feature>
<feature type="topological domain" description="Cytoplasmic" evidence="2">
    <location>
        <begin position="227"/>
        <end position="229"/>
    </location>
</feature>
<feature type="transmembrane region" description="Helical" evidence="6">
    <location>
        <begin position="230"/>
        <end position="247"/>
    </location>
</feature>
<feature type="topological domain" description="Periplasmic" evidence="2">
    <location>
        <begin position="248"/>
        <end position="300"/>
    </location>
</feature>
<feature type="transmembrane region" description="Helical" evidence="6">
    <location>
        <begin position="301"/>
        <end position="318"/>
    </location>
</feature>
<feature type="topological domain" description="Cytoplasmic" evidence="2">
    <location>
        <begin position="319"/>
        <end position="329"/>
    </location>
</feature>
<feature type="transmembrane region" description="Helical" evidence="6">
    <location>
        <begin position="330"/>
        <end position="349"/>
    </location>
</feature>
<feature type="topological domain" description="Periplasmic" evidence="2">
    <location>
        <begin position="350"/>
        <end position="352"/>
    </location>
</feature>
<feature type="transmembrane region" description="Helical" evidence="6">
    <location>
        <begin position="353"/>
        <end position="370"/>
    </location>
</feature>
<feature type="topological domain" description="Cytoplasmic" evidence="2">
    <location>
        <begin position="371"/>
        <end position="382"/>
    </location>
</feature>
<evidence type="ECO:0000269" key="1">
    <source>
    </source>
</evidence>
<evidence type="ECO:0000269" key="2">
    <source>
    </source>
</evidence>
<evidence type="ECO:0000303" key="3">
    <source>
    </source>
</evidence>
<evidence type="ECO:0000303" key="4">
    <source>
    </source>
</evidence>
<evidence type="ECO:0000305" key="5">
    <source>
    </source>
</evidence>
<evidence type="ECO:0000305" key="6">
    <source>
    </source>
</evidence>
<accession>P37784</accession>
<keyword id="KW-0997">Cell inner membrane</keyword>
<keyword id="KW-1003">Cell membrane</keyword>
<keyword id="KW-0448">Lipopolysaccharide biosynthesis</keyword>
<keyword id="KW-0472">Membrane</keyword>
<keyword id="KW-1185">Reference proteome</keyword>
<keyword id="KW-0808">Transferase</keyword>
<keyword id="KW-0812">Transmembrane</keyword>
<keyword id="KW-1133">Transmembrane helix</keyword>
<sequence>MNNINKIFITFLCIELIIGGGGRLLEPLGIFPLRYLLFVFSFILLIFNLVTFNFSITQKCVSLFIWLLLFPFYGFFVGLLAGNKINDILFDVQPYLFMLSLIYLFTLRYTLKVFSCEIFIKIVNAFALYGSLLYISYIILLNFGLLNFNLIYEHLSLTSEFFFRPDGAFFSKSFYFFGVGAIISFVDKKYLKCLIIVLAILLTESRGVLLFTTLSLLLASFKLHKLYLNTIIIILGSVLFIIMLYMVGSRSEDSDSVRFNDLYFYYKNVDLATFLFGRGFGSFILDRLRIEIVPLEILQKTGVIGVFISLVPMLLIFLKGYFLNSTKTSLMMSLILFFSITVSITNPFLFTPMGIFIIGVVVLWVFSIENIQISNNLTSGAK</sequence>
<reference key="1">
    <citation type="journal article" date="1994" name="J. Bacteriol.">
        <title>Characterization of the rfc region of Shigella flexneri.</title>
        <authorList>
            <person name="Morona R."/>
            <person name="Mavris M."/>
            <person name="Fallarino A."/>
            <person name="Manning P.A."/>
        </authorList>
    </citation>
    <scope>NUCLEOTIDE SEQUENCE [GENOMIC DNA]</scope>
    <scope>FUNCTION IN LPS BIOSYNTHESIS</scope>
    <scope>PATHWAY</scope>
    <scope>DISRUPTION PHENOTYPE</scope>
    <source>
        <strain>PE577 / Serotype 2a</strain>
    </source>
</reference>
<reference key="2">
    <citation type="journal article" date="2002" name="Nucleic Acids Res.">
        <title>Genome sequence of Shigella flexneri 2a: insights into pathogenicity through comparison with genomes of Escherichia coli K12 and O157.</title>
        <authorList>
            <person name="Jin Q."/>
            <person name="Yuan Z."/>
            <person name="Xu J."/>
            <person name="Wang Y."/>
            <person name="Shen Y."/>
            <person name="Lu W."/>
            <person name="Wang J."/>
            <person name="Liu H."/>
            <person name="Yang J."/>
            <person name="Yang F."/>
            <person name="Zhang X."/>
            <person name="Zhang J."/>
            <person name="Yang G."/>
            <person name="Wu H."/>
            <person name="Qu D."/>
            <person name="Dong J."/>
            <person name="Sun L."/>
            <person name="Xue Y."/>
            <person name="Zhao A."/>
            <person name="Gao Y."/>
            <person name="Zhu J."/>
            <person name="Kan B."/>
            <person name="Ding K."/>
            <person name="Chen S."/>
            <person name="Cheng H."/>
            <person name="Yao Z."/>
            <person name="He B."/>
            <person name="Chen R."/>
            <person name="Ma D."/>
            <person name="Qiang B."/>
            <person name="Wen Y."/>
            <person name="Hou Y."/>
            <person name="Yu J."/>
        </authorList>
    </citation>
    <scope>NUCLEOTIDE SEQUENCE [LARGE SCALE GENOMIC DNA]</scope>
    <source>
        <strain>301 / Serotype 2a</strain>
    </source>
</reference>
<reference key="3">
    <citation type="journal article" date="2003" name="Infect. Immun.">
        <title>Complete genome sequence and comparative genomics of Shigella flexneri serotype 2a strain 2457T.</title>
        <authorList>
            <person name="Wei J."/>
            <person name="Goldberg M.B."/>
            <person name="Burland V."/>
            <person name="Venkatesan M.M."/>
            <person name="Deng W."/>
            <person name="Fournier G."/>
            <person name="Mayhew G.F."/>
            <person name="Plunkett G. III"/>
            <person name="Rose D.J."/>
            <person name="Darling A."/>
            <person name="Mau B."/>
            <person name="Perna N.T."/>
            <person name="Payne S.M."/>
            <person name="Runyen-Janecky L.J."/>
            <person name="Zhou S."/>
            <person name="Schwartz D.C."/>
            <person name="Blattner F.R."/>
        </authorList>
    </citation>
    <scope>NUCLEOTIDE SEQUENCE [LARGE SCALE GENOMIC DNA]</scope>
    <source>
        <strain>ATCC 700930 / 2457T / Serotype 2a</strain>
    </source>
</reference>
<reference key="4">
    <citation type="journal article" date="1998" name="Mol. Microbiol.">
        <title>Overexpression and topology of the Shigella flexneri O-antigen polymerase (Rfc/Wzy).</title>
        <authorList>
            <person name="Daniels C."/>
            <person name="Vindurampulle C."/>
            <person name="Morona R."/>
        </authorList>
    </citation>
    <scope>SUBCELLULAR LOCATION</scope>
    <scope>TOPOLOGY</scope>
    <source>
        <strain>PE577 / Serotype 2a</strain>
    </source>
</reference>
<organism>
    <name type="scientific">Shigella flexneri</name>
    <dbReference type="NCBI Taxonomy" id="623"/>
    <lineage>
        <taxon>Bacteria</taxon>
        <taxon>Pseudomonadati</taxon>
        <taxon>Pseudomonadota</taxon>
        <taxon>Gammaproteobacteria</taxon>
        <taxon>Enterobacterales</taxon>
        <taxon>Enterobacteriaceae</taxon>
        <taxon>Shigella</taxon>
    </lineage>
</organism>
<protein>
    <recommendedName>
        <fullName evidence="3">O-antigen polymerase</fullName>
        <ecNumber evidence="5">2.4.99.27</ecNumber>
    </recommendedName>
</protein>
<proteinExistence type="evidence at protein level"/>